<accession>Q0T9J2</accession>
<keyword id="KW-0235">DNA replication</keyword>
<keyword id="KW-0238">DNA-binding</keyword>
<keyword id="KW-0639">Primosome</keyword>
<organism>
    <name type="scientific">Escherichia coli O6:K15:H31 (strain 536 / UPEC)</name>
    <dbReference type="NCBI Taxonomy" id="362663"/>
    <lineage>
        <taxon>Bacteria</taxon>
        <taxon>Pseudomonadati</taxon>
        <taxon>Pseudomonadota</taxon>
        <taxon>Gammaproteobacteria</taxon>
        <taxon>Enterobacterales</taxon>
        <taxon>Enterobacteriaceae</taxon>
        <taxon>Escherichia</taxon>
    </lineage>
</organism>
<proteinExistence type="inferred from homology"/>
<reference key="1">
    <citation type="journal article" date="2006" name="Mol. Microbiol.">
        <title>Role of pathogenicity island-associated integrases in the genome plasticity of uropathogenic Escherichia coli strain 536.</title>
        <authorList>
            <person name="Hochhut B."/>
            <person name="Wilde C."/>
            <person name="Balling G."/>
            <person name="Middendorf B."/>
            <person name="Dobrindt U."/>
            <person name="Brzuszkiewicz E."/>
            <person name="Gottschalk G."/>
            <person name="Carniel E."/>
            <person name="Hacker J."/>
        </authorList>
    </citation>
    <scope>NUCLEOTIDE SEQUENCE [LARGE SCALE GENOMIC DNA]</scope>
    <source>
        <strain>536 / UPEC</strain>
    </source>
</reference>
<feature type="chain" id="PRO_1000083276" description="Replication restart protein PriB">
    <location>
        <begin position="1"/>
        <end position="104"/>
    </location>
</feature>
<feature type="domain" description="SSB" evidence="1">
    <location>
        <begin position="1"/>
        <end position="101"/>
    </location>
</feature>
<protein>
    <recommendedName>
        <fullName evidence="1">Replication restart protein PriB</fullName>
    </recommendedName>
</protein>
<gene>
    <name evidence="1" type="primary">priB</name>
    <name type="ordered locus">ECP_4446</name>
</gene>
<dbReference type="EMBL" id="CP000247">
    <property type="protein sequence ID" value="ABG72387.1"/>
    <property type="molecule type" value="Genomic_DNA"/>
</dbReference>
<dbReference type="RefSeq" id="WP_001296681.1">
    <property type="nucleotide sequence ID" value="NC_008253.1"/>
</dbReference>
<dbReference type="SMR" id="Q0T9J2"/>
<dbReference type="GeneID" id="93777622"/>
<dbReference type="KEGG" id="ecp:ECP_4446"/>
<dbReference type="HOGENOM" id="CLU_166075_0_0_6"/>
<dbReference type="Proteomes" id="UP000009182">
    <property type="component" value="Chromosome"/>
</dbReference>
<dbReference type="GO" id="GO:1990077">
    <property type="term" value="C:primosome complex"/>
    <property type="evidence" value="ECO:0007669"/>
    <property type="project" value="UniProtKB-KW"/>
</dbReference>
<dbReference type="GO" id="GO:0003697">
    <property type="term" value="F:single-stranded DNA binding"/>
    <property type="evidence" value="ECO:0007669"/>
    <property type="project" value="UniProtKB-UniRule"/>
</dbReference>
<dbReference type="GO" id="GO:0006269">
    <property type="term" value="P:DNA replication, synthesis of primer"/>
    <property type="evidence" value="ECO:0007669"/>
    <property type="project" value="UniProtKB-KW"/>
</dbReference>
<dbReference type="CDD" id="cd04496">
    <property type="entry name" value="SSB_OBF"/>
    <property type="match status" value="1"/>
</dbReference>
<dbReference type="FunFam" id="2.40.50.140:FF:000077">
    <property type="entry name" value="Primosomal replication protein N"/>
    <property type="match status" value="1"/>
</dbReference>
<dbReference type="Gene3D" id="2.40.50.140">
    <property type="entry name" value="Nucleic acid-binding proteins"/>
    <property type="match status" value="1"/>
</dbReference>
<dbReference type="HAMAP" id="MF_00720">
    <property type="entry name" value="PriB"/>
    <property type="match status" value="1"/>
</dbReference>
<dbReference type="InterPro" id="IPR012340">
    <property type="entry name" value="NA-bd_OB-fold"/>
</dbReference>
<dbReference type="InterPro" id="IPR000424">
    <property type="entry name" value="Primosome_PriB/ssb"/>
</dbReference>
<dbReference type="InterPro" id="IPR023646">
    <property type="entry name" value="Prisomal_replication_PriB"/>
</dbReference>
<dbReference type="NCBIfam" id="TIGR04418">
    <property type="entry name" value="PriB_gamma"/>
    <property type="match status" value="1"/>
</dbReference>
<dbReference type="Pfam" id="PF22657">
    <property type="entry name" value="SSB_1"/>
    <property type="match status" value="1"/>
</dbReference>
<dbReference type="PIRSF" id="PIRSF003135">
    <property type="entry name" value="Primosomal_n"/>
    <property type="match status" value="1"/>
</dbReference>
<dbReference type="SUPFAM" id="SSF50249">
    <property type="entry name" value="Nucleic acid-binding proteins"/>
    <property type="match status" value="1"/>
</dbReference>
<dbReference type="PROSITE" id="PS50935">
    <property type="entry name" value="SSB"/>
    <property type="match status" value="1"/>
</dbReference>
<evidence type="ECO:0000255" key="1">
    <source>
        <dbReference type="HAMAP-Rule" id="MF_00720"/>
    </source>
</evidence>
<comment type="function">
    <text evidence="1">Involved in the restart of stalled replication forks, which reloads the replicative helicase on sites other than the origin of replication; the PriA-PriB pathway is the major replication restart pathway. During primosome assembly it facilitates complex formation between PriA and DnaT on DNA; stabilizes PriA on DNA. Stimulates the DNA unwinding activity of PriA helicase.</text>
</comment>
<comment type="subunit">
    <text evidence="1">Homodimer. Interacts with PriA and DnaT. Component of the replication restart primosome. Primosome assembly occurs via a 'hand-off' mechanism. PriA binds to replication forks, subsequently PriB then DnaT bind; DnaT then displaces ssDNA to generate the helicase loading substrate.</text>
</comment>
<comment type="similarity">
    <text evidence="1">Belongs to the PriB family.</text>
</comment>
<name>PRIB_ECOL5</name>
<sequence length="104" mass="11472">MTNRLVLSGTVCRTPLRKVSPSGIPHCQFVLEHRSVQEEAGFHRQAWCQMPVIVSGHENQAITHSITVGSRITVQGFISCHKAKNGLSKMVLHAEQIELIDSGD</sequence>